<organism>
    <name type="scientific">Shewanella baltica (strain OS185)</name>
    <dbReference type="NCBI Taxonomy" id="402882"/>
    <lineage>
        <taxon>Bacteria</taxon>
        <taxon>Pseudomonadati</taxon>
        <taxon>Pseudomonadota</taxon>
        <taxon>Gammaproteobacteria</taxon>
        <taxon>Alteromonadales</taxon>
        <taxon>Shewanellaceae</taxon>
        <taxon>Shewanella</taxon>
    </lineage>
</organism>
<accession>A6WIA1</accession>
<keyword id="KW-0342">GTP-binding</keyword>
<keyword id="KW-0378">Hydrolase</keyword>
<keyword id="KW-0479">Metal-binding</keyword>
<keyword id="KW-0547">Nucleotide-binding</keyword>
<keyword id="KW-0554">One-carbon metabolism</keyword>
<keyword id="KW-0862">Zinc</keyword>
<sequence>MALSEAAVKVQAALLERGLETPMLPSVYSSEERKDKIEHHMKEILTLMSLDLSDDSLADTPRRIAKMYVDEIFSGLDYANFPKITVIDNKMGFDEMVRVQDISLTSTCEHHLVTIDGTATIAYLPRKKIIGLSKINRIVRFFAQRPQVQERLTQQVLVALQTLLETKDVAVKMDAVHYCVKSRGVMDSTSSTTTTALGGIFKSNPATRAEFLHQSK</sequence>
<proteinExistence type="inferred from homology"/>
<name>GCH1_SHEB8</name>
<comment type="catalytic activity">
    <reaction evidence="2">
        <text>GTP + H2O = 7,8-dihydroneopterin 3'-triphosphate + formate + H(+)</text>
        <dbReference type="Rhea" id="RHEA:17473"/>
        <dbReference type="ChEBI" id="CHEBI:15377"/>
        <dbReference type="ChEBI" id="CHEBI:15378"/>
        <dbReference type="ChEBI" id="CHEBI:15740"/>
        <dbReference type="ChEBI" id="CHEBI:37565"/>
        <dbReference type="ChEBI" id="CHEBI:58462"/>
        <dbReference type="EC" id="3.5.4.16"/>
    </reaction>
</comment>
<comment type="pathway">
    <text evidence="2">Cofactor biosynthesis; 7,8-dihydroneopterin triphosphate biosynthesis; 7,8-dihydroneopterin triphosphate from GTP: step 1/1.</text>
</comment>
<comment type="subunit">
    <text evidence="1">Toroid-shaped homodecamer, composed of two pentamers of five dimers.</text>
</comment>
<comment type="similarity">
    <text evidence="2">Belongs to the GTP cyclohydrolase I family.</text>
</comment>
<dbReference type="EC" id="3.5.4.16" evidence="2"/>
<dbReference type="EMBL" id="CP000753">
    <property type="protein sequence ID" value="ABS06540.1"/>
    <property type="molecule type" value="Genomic_DNA"/>
</dbReference>
<dbReference type="RefSeq" id="WP_006079864.1">
    <property type="nucleotide sequence ID" value="NC_009665.1"/>
</dbReference>
<dbReference type="SMR" id="A6WIA1"/>
<dbReference type="GeneID" id="11770722"/>
<dbReference type="KEGG" id="sbm:Shew185_0371"/>
<dbReference type="HOGENOM" id="CLU_049768_3_2_6"/>
<dbReference type="UniPathway" id="UPA00848">
    <property type="reaction ID" value="UER00151"/>
</dbReference>
<dbReference type="GO" id="GO:0005737">
    <property type="term" value="C:cytoplasm"/>
    <property type="evidence" value="ECO:0007669"/>
    <property type="project" value="TreeGrafter"/>
</dbReference>
<dbReference type="GO" id="GO:0005525">
    <property type="term" value="F:GTP binding"/>
    <property type="evidence" value="ECO:0007669"/>
    <property type="project" value="UniProtKB-KW"/>
</dbReference>
<dbReference type="GO" id="GO:0003934">
    <property type="term" value="F:GTP cyclohydrolase I activity"/>
    <property type="evidence" value="ECO:0007669"/>
    <property type="project" value="UniProtKB-UniRule"/>
</dbReference>
<dbReference type="GO" id="GO:0008270">
    <property type="term" value="F:zinc ion binding"/>
    <property type="evidence" value="ECO:0007669"/>
    <property type="project" value="UniProtKB-UniRule"/>
</dbReference>
<dbReference type="GO" id="GO:0006730">
    <property type="term" value="P:one-carbon metabolic process"/>
    <property type="evidence" value="ECO:0007669"/>
    <property type="project" value="UniProtKB-UniRule"/>
</dbReference>
<dbReference type="GO" id="GO:0006729">
    <property type="term" value="P:tetrahydrobiopterin biosynthetic process"/>
    <property type="evidence" value="ECO:0007669"/>
    <property type="project" value="TreeGrafter"/>
</dbReference>
<dbReference type="GO" id="GO:0046654">
    <property type="term" value="P:tetrahydrofolate biosynthetic process"/>
    <property type="evidence" value="ECO:0007669"/>
    <property type="project" value="UniProtKB-UniRule"/>
</dbReference>
<dbReference type="FunFam" id="1.10.286.10:FF:000002">
    <property type="entry name" value="GTP cyclohydrolase 1"/>
    <property type="match status" value="1"/>
</dbReference>
<dbReference type="FunFam" id="3.30.1130.10:FF:000001">
    <property type="entry name" value="GTP cyclohydrolase 1"/>
    <property type="match status" value="1"/>
</dbReference>
<dbReference type="Gene3D" id="1.10.286.10">
    <property type="match status" value="1"/>
</dbReference>
<dbReference type="Gene3D" id="3.30.1130.10">
    <property type="match status" value="1"/>
</dbReference>
<dbReference type="HAMAP" id="MF_00223">
    <property type="entry name" value="FolE"/>
    <property type="match status" value="1"/>
</dbReference>
<dbReference type="InterPro" id="IPR043133">
    <property type="entry name" value="GTP-CH-I_C/QueF"/>
</dbReference>
<dbReference type="InterPro" id="IPR043134">
    <property type="entry name" value="GTP-CH-I_N"/>
</dbReference>
<dbReference type="InterPro" id="IPR001474">
    <property type="entry name" value="GTP_CycHdrlase_I"/>
</dbReference>
<dbReference type="InterPro" id="IPR018234">
    <property type="entry name" value="GTP_CycHdrlase_I_CS"/>
</dbReference>
<dbReference type="InterPro" id="IPR020602">
    <property type="entry name" value="GTP_CycHdrlase_I_dom"/>
</dbReference>
<dbReference type="NCBIfam" id="TIGR00063">
    <property type="entry name" value="folE"/>
    <property type="match status" value="1"/>
</dbReference>
<dbReference type="NCBIfam" id="NF006824">
    <property type="entry name" value="PRK09347.1-1"/>
    <property type="match status" value="1"/>
</dbReference>
<dbReference type="NCBIfam" id="NF006826">
    <property type="entry name" value="PRK09347.1-3"/>
    <property type="match status" value="1"/>
</dbReference>
<dbReference type="PANTHER" id="PTHR11109:SF7">
    <property type="entry name" value="GTP CYCLOHYDROLASE 1"/>
    <property type="match status" value="1"/>
</dbReference>
<dbReference type="PANTHER" id="PTHR11109">
    <property type="entry name" value="GTP CYCLOHYDROLASE I"/>
    <property type="match status" value="1"/>
</dbReference>
<dbReference type="Pfam" id="PF01227">
    <property type="entry name" value="GTP_cyclohydroI"/>
    <property type="match status" value="1"/>
</dbReference>
<dbReference type="SUPFAM" id="SSF55620">
    <property type="entry name" value="Tetrahydrobiopterin biosynthesis enzymes-like"/>
    <property type="match status" value="1"/>
</dbReference>
<dbReference type="PROSITE" id="PS00859">
    <property type="entry name" value="GTP_CYCLOHYDROL_1_1"/>
    <property type="match status" value="1"/>
</dbReference>
<dbReference type="PROSITE" id="PS00860">
    <property type="entry name" value="GTP_CYCLOHYDROL_1_2"/>
    <property type="match status" value="1"/>
</dbReference>
<gene>
    <name evidence="2" type="primary">folE</name>
    <name type="ordered locus">Shew185_0371</name>
</gene>
<reference key="1">
    <citation type="submission" date="2007-07" db="EMBL/GenBank/DDBJ databases">
        <title>Complete sequence of chromosome of Shewanella baltica OS185.</title>
        <authorList>
            <consortium name="US DOE Joint Genome Institute"/>
            <person name="Copeland A."/>
            <person name="Lucas S."/>
            <person name="Lapidus A."/>
            <person name="Barry K."/>
            <person name="Glavina del Rio T."/>
            <person name="Dalin E."/>
            <person name="Tice H."/>
            <person name="Pitluck S."/>
            <person name="Sims D."/>
            <person name="Brettin T."/>
            <person name="Bruce D."/>
            <person name="Detter J.C."/>
            <person name="Han C."/>
            <person name="Schmutz J."/>
            <person name="Larimer F."/>
            <person name="Land M."/>
            <person name="Hauser L."/>
            <person name="Kyrpides N."/>
            <person name="Mikhailova N."/>
            <person name="Brettar I."/>
            <person name="Rodrigues J."/>
            <person name="Konstantinidis K."/>
            <person name="Tiedje J."/>
            <person name="Richardson P."/>
        </authorList>
    </citation>
    <scope>NUCLEOTIDE SEQUENCE [LARGE SCALE GENOMIC DNA]</scope>
    <source>
        <strain>OS185</strain>
    </source>
</reference>
<feature type="chain" id="PRO_1000043730" description="GTP cyclohydrolase 1">
    <location>
        <begin position="1"/>
        <end position="216"/>
    </location>
</feature>
<feature type="binding site" evidence="2">
    <location>
        <position position="108"/>
    </location>
    <ligand>
        <name>Zn(2+)</name>
        <dbReference type="ChEBI" id="CHEBI:29105"/>
    </ligand>
</feature>
<feature type="binding site" evidence="2">
    <location>
        <position position="111"/>
    </location>
    <ligand>
        <name>Zn(2+)</name>
        <dbReference type="ChEBI" id="CHEBI:29105"/>
    </ligand>
</feature>
<feature type="binding site" evidence="2">
    <location>
        <position position="179"/>
    </location>
    <ligand>
        <name>Zn(2+)</name>
        <dbReference type="ChEBI" id="CHEBI:29105"/>
    </ligand>
</feature>
<evidence type="ECO:0000250" key="1"/>
<evidence type="ECO:0000255" key="2">
    <source>
        <dbReference type="HAMAP-Rule" id="MF_00223"/>
    </source>
</evidence>
<protein>
    <recommendedName>
        <fullName evidence="2">GTP cyclohydrolase 1</fullName>
        <ecNumber evidence="2">3.5.4.16</ecNumber>
    </recommendedName>
    <alternativeName>
        <fullName evidence="2">GTP cyclohydrolase I</fullName>
        <shortName evidence="2">GTP-CH-I</shortName>
    </alternativeName>
</protein>